<accession>P0DI63</accession>
<protein>
    <recommendedName>
        <fullName>Casparian strip membrane protein 1</fullName>
        <shortName>ShCASP1</shortName>
    </recommendedName>
</protein>
<dbReference type="EMBL" id="FS447700">
    <property type="status" value="NOT_ANNOTATED_CDS"/>
    <property type="molecule type" value="mRNA"/>
</dbReference>
<dbReference type="SMR" id="P0DI63"/>
<dbReference type="GO" id="GO:0005886">
    <property type="term" value="C:plasma membrane"/>
    <property type="evidence" value="ECO:0007669"/>
    <property type="project" value="UniProtKB-SubCell"/>
</dbReference>
<dbReference type="GO" id="GO:0071555">
    <property type="term" value="P:cell wall organization"/>
    <property type="evidence" value="ECO:0007669"/>
    <property type="project" value="UniProtKB-KW"/>
</dbReference>
<dbReference type="InterPro" id="IPR006459">
    <property type="entry name" value="CASP/CASPL"/>
</dbReference>
<dbReference type="InterPro" id="IPR006702">
    <property type="entry name" value="CASP_dom"/>
</dbReference>
<dbReference type="InterPro" id="IPR044173">
    <property type="entry name" value="CASPL"/>
</dbReference>
<dbReference type="NCBIfam" id="TIGR01569">
    <property type="entry name" value="A_tha_TIGR01569"/>
    <property type="match status" value="1"/>
</dbReference>
<dbReference type="PANTHER" id="PTHR36488:SF11">
    <property type="entry name" value="CASP-LIKE PROTEIN"/>
    <property type="match status" value="1"/>
</dbReference>
<dbReference type="PANTHER" id="PTHR36488">
    <property type="entry name" value="CASP-LIKE PROTEIN 1U1"/>
    <property type="match status" value="1"/>
</dbReference>
<dbReference type="Pfam" id="PF04535">
    <property type="entry name" value="CASP_dom"/>
    <property type="match status" value="1"/>
</dbReference>
<name>CASP1_STRHE</name>
<sequence length="202" mass="21561">MEKNKSTAIEIAESSKESKGKAPLLAAAVGHDRAAGYKRGVSIFDLFLRISAATAALAATIVMGTTEQTLPFFTQFFQFRAQYDDLPTFTFFVVGMAIVTGYLILSVPFSIVCIARPVAIGPRFLLIVGDTLKAVLATSAAGSSAAIVYLAHNGNSDANWLDICQQFNDFCQRVSGAVVAAFVAVVLLIFLIVLSAMALRKN</sequence>
<organism>
    <name type="scientific">Striga hermonthica</name>
    <name type="common">Purple witchweed</name>
    <name type="synonym">Buchnera hermonthica</name>
    <dbReference type="NCBI Taxonomy" id="68872"/>
    <lineage>
        <taxon>Eukaryota</taxon>
        <taxon>Viridiplantae</taxon>
        <taxon>Streptophyta</taxon>
        <taxon>Embryophyta</taxon>
        <taxon>Tracheophyta</taxon>
        <taxon>Spermatophyta</taxon>
        <taxon>Magnoliopsida</taxon>
        <taxon>eudicotyledons</taxon>
        <taxon>Gunneridae</taxon>
        <taxon>Pentapetalae</taxon>
        <taxon>asterids</taxon>
        <taxon>lamiids</taxon>
        <taxon>Lamiales</taxon>
        <taxon>Orobanchaceae</taxon>
        <taxon>Buchnereae</taxon>
        <taxon>Striga</taxon>
    </lineage>
</organism>
<comment type="function">
    <text evidence="1">Regulates membrane-cell wall junctions and localized cell wall deposition. Required for establishment of the Casparian strip membrane domain (CSD) and the subsequent formation of Casparian strips, a cell wall modification of the root endodermis that determines an apoplastic barrier between the intraorganismal apoplasm and the extraorganismal apoplasm and prevents lateral diffusion (By similarity).</text>
</comment>
<comment type="subunit">
    <text evidence="1">Homodimer and heterodimers.</text>
</comment>
<comment type="subcellular location">
    <subcellularLocation>
        <location evidence="1">Cell membrane</location>
        <topology evidence="1">Multi-pass membrane protein</topology>
    </subcellularLocation>
    <text evidence="1">Very restricted localization following a belt shape within the plasma membrane which coincides with the position of the Casparian strip membrane domain in the root endodermis.</text>
</comment>
<comment type="similarity">
    <text evidence="3">Belongs to the Casparian strip membrane proteins (CASP) family.</text>
</comment>
<reference key="1">
    <citation type="journal article" date="2010" name="BMC Plant Biol.">
        <title>A full-length enriched cDNA library and expressed sequence tag analysis of the parasitic weed, Striga hermonthica.</title>
        <authorList>
            <person name="Yoshida S."/>
            <person name="Ishida J.K."/>
            <person name="Kamal N.M."/>
            <person name="Ali A.M."/>
            <person name="Namba S."/>
            <person name="Shirasu K."/>
        </authorList>
    </citation>
    <scope>NUCLEOTIDE SEQUENCE [LARGE SCALE MRNA]</scope>
</reference>
<reference key="2">
    <citation type="journal article" date="2014" name="Plant Physiol.">
        <title>Functional and evolutionary analysis of the CASPARIAN STRIP MEMBRANE DOMAIN PROTEIN family.</title>
        <authorList>
            <person name="Roppolo D."/>
            <person name="Boeckmann B."/>
            <person name="Pfister A."/>
            <person name="Boutet E."/>
            <person name="Rubio M.C."/>
            <person name="Denervaud-Tendon V."/>
            <person name="Vermeer J.E."/>
            <person name="Gheyselinck J."/>
            <person name="Xenarios I."/>
            <person name="Geldner N."/>
        </authorList>
    </citation>
    <scope>GENE FAMILY</scope>
    <scope>NOMENCLATURE</scope>
</reference>
<feature type="chain" id="PRO_0000417807" description="Casparian strip membrane protein 1">
    <location>
        <begin position="1"/>
        <end position="202"/>
    </location>
</feature>
<feature type="topological domain" description="Cytoplasmic" evidence="2">
    <location>
        <begin position="1"/>
        <end position="42"/>
    </location>
</feature>
<feature type="transmembrane region" description="Helical" evidence="2">
    <location>
        <begin position="43"/>
        <end position="63"/>
    </location>
</feature>
<feature type="topological domain" description="Extracellular" evidence="2">
    <location>
        <begin position="64"/>
        <end position="90"/>
    </location>
</feature>
<feature type="transmembrane region" description="Helical" evidence="2">
    <location>
        <begin position="91"/>
        <end position="111"/>
    </location>
</feature>
<feature type="topological domain" description="Cytoplasmic" evidence="2">
    <location>
        <begin position="112"/>
        <end position="130"/>
    </location>
</feature>
<feature type="transmembrane region" description="Helical" evidence="2">
    <location>
        <begin position="131"/>
        <end position="151"/>
    </location>
</feature>
<feature type="topological domain" description="Extracellular" evidence="2">
    <location>
        <begin position="152"/>
        <end position="173"/>
    </location>
</feature>
<feature type="transmembrane region" description="Helical" evidence="2">
    <location>
        <begin position="174"/>
        <end position="194"/>
    </location>
</feature>
<feature type="topological domain" description="Cytoplasmic" evidence="2">
    <location>
        <begin position="195"/>
        <end position="202"/>
    </location>
</feature>
<evidence type="ECO:0000250" key="1"/>
<evidence type="ECO:0000255" key="2"/>
<evidence type="ECO:0000305" key="3"/>
<keyword id="KW-1003">Cell membrane</keyword>
<keyword id="KW-0961">Cell wall biogenesis/degradation</keyword>
<keyword id="KW-0472">Membrane</keyword>
<keyword id="KW-0812">Transmembrane</keyword>
<keyword id="KW-1133">Transmembrane helix</keyword>
<proteinExistence type="evidence at transcript level"/>